<proteinExistence type="inferred from homology"/>
<name>MNMG_THEVB</name>
<reference key="1">
    <citation type="journal article" date="2002" name="DNA Res.">
        <title>Complete genome structure of the thermophilic cyanobacterium Thermosynechococcus elongatus BP-1.</title>
        <authorList>
            <person name="Nakamura Y."/>
            <person name="Kaneko T."/>
            <person name="Sato S."/>
            <person name="Ikeuchi M."/>
            <person name="Katoh H."/>
            <person name="Sasamoto S."/>
            <person name="Watanabe A."/>
            <person name="Iriguchi M."/>
            <person name="Kawashima K."/>
            <person name="Kimura T."/>
            <person name="Kishida Y."/>
            <person name="Kiyokawa C."/>
            <person name="Kohara M."/>
            <person name="Matsumoto M."/>
            <person name="Matsuno A."/>
            <person name="Nakazaki N."/>
            <person name="Shimpo S."/>
            <person name="Sugimoto M."/>
            <person name="Takeuchi C."/>
            <person name="Yamada M."/>
            <person name="Tabata S."/>
        </authorList>
    </citation>
    <scope>NUCLEOTIDE SEQUENCE [LARGE SCALE GENOMIC DNA]</scope>
    <source>
        <strain>NIES-2133 / IAM M-273 / BP-1</strain>
    </source>
</reference>
<accession>Q8DLF8</accession>
<comment type="function">
    <text evidence="1">NAD-binding protein involved in the addition of a carboxymethylaminomethyl (cmnm) group at the wobble position (U34) of certain tRNAs, forming tRNA-cmnm(5)s(2)U34.</text>
</comment>
<comment type="cofactor">
    <cofactor evidence="1">
        <name>FAD</name>
        <dbReference type="ChEBI" id="CHEBI:57692"/>
    </cofactor>
</comment>
<comment type="subunit">
    <text evidence="1">Homodimer. Heterotetramer of two MnmE and two MnmG subunits.</text>
</comment>
<comment type="subcellular location">
    <subcellularLocation>
        <location evidence="1">Cytoplasm</location>
    </subcellularLocation>
</comment>
<comment type="similarity">
    <text evidence="1">Belongs to the MnmG family.</text>
</comment>
<protein>
    <recommendedName>
        <fullName evidence="1">tRNA uridine 5-carboxymethylaminomethyl modification enzyme MnmG</fullName>
    </recommendedName>
    <alternativeName>
        <fullName evidence="1">Glucose-inhibited division protein A</fullName>
    </alternativeName>
</protein>
<feature type="chain" id="PRO_0000117196" description="tRNA uridine 5-carboxymethylaminomethyl modification enzyme MnmG">
    <location>
        <begin position="1"/>
        <end position="637"/>
    </location>
</feature>
<feature type="binding site" evidence="1">
    <location>
        <begin position="17"/>
        <end position="22"/>
    </location>
    <ligand>
        <name>FAD</name>
        <dbReference type="ChEBI" id="CHEBI:57692"/>
    </ligand>
</feature>
<feature type="binding site" evidence="1">
    <location>
        <begin position="278"/>
        <end position="292"/>
    </location>
    <ligand>
        <name>NAD(+)</name>
        <dbReference type="ChEBI" id="CHEBI:57540"/>
    </ligand>
</feature>
<dbReference type="EMBL" id="BA000039">
    <property type="protein sequence ID" value="BAC08087.1"/>
    <property type="molecule type" value="Genomic_DNA"/>
</dbReference>
<dbReference type="RefSeq" id="NP_681325.1">
    <property type="nucleotide sequence ID" value="NC_004113.1"/>
</dbReference>
<dbReference type="RefSeq" id="WP_011056385.1">
    <property type="nucleotide sequence ID" value="NC_004113.1"/>
</dbReference>
<dbReference type="SMR" id="Q8DLF8"/>
<dbReference type="STRING" id="197221.gene:10747125"/>
<dbReference type="EnsemblBacteria" id="BAC08087">
    <property type="protein sequence ID" value="BAC08087"/>
    <property type="gene ID" value="BAC08087"/>
</dbReference>
<dbReference type="KEGG" id="tel:tlr0535"/>
<dbReference type="PATRIC" id="fig|197221.4.peg.564"/>
<dbReference type="eggNOG" id="COG0445">
    <property type="taxonomic scope" value="Bacteria"/>
</dbReference>
<dbReference type="Proteomes" id="UP000000440">
    <property type="component" value="Chromosome"/>
</dbReference>
<dbReference type="GO" id="GO:0005737">
    <property type="term" value="C:cytoplasm"/>
    <property type="evidence" value="ECO:0007669"/>
    <property type="project" value="UniProtKB-SubCell"/>
</dbReference>
<dbReference type="GO" id="GO:0050660">
    <property type="term" value="F:flavin adenine dinucleotide binding"/>
    <property type="evidence" value="ECO:0007669"/>
    <property type="project" value="UniProtKB-UniRule"/>
</dbReference>
<dbReference type="GO" id="GO:0030488">
    <property type="term" value="P:tRNA methylation"/>
    <property type="evidence" value="ECO:0007669"/>
    <property type="project" value="TreeGrafter"/>
</dbReference>
<dbReference type="GO" id="GO:0002098">
    <property type="term" value="P:tRNA wobble uridine modification"/>
    <property type="evidence" value="ECO:0007669"/>
    <property type="project" value="InterPro"/>
</dbReference>
<dbReference type="FunFam" id="1.10.10.1800:FF:000001">
    <property type="entry name" value="tRNA uridine 5-carboxymethylaminomethyl modification enzyme MnmG"/>
    <property type="match status" value="1"/>
</dbReference>
<dbReference type="FunFam" id="1.10.150.570:FF:000001">
    <property type="entry name" value="tRNA uridine 5-carboxymethylaminomethyl modification enzyme MnmG"/>
    <property type="match status" value="1"/>
</dbReference>
<dbReference type="FunFam" id="3.50.50.60:FF:000094">
    <property type="entry name" value="tRNA uridine 5-carboxymethylaminomethyl modification enzyme MnmG"/>
    <property type="match status" value="1"/>
</dbReference>
<dbReference type="FunFam" id="3.50.50.60:FF:000119">
    <property type="entry name" value="tRNA uridine 5-carboxymethylaminomethyl modification enzyme MnmG"/>
    <property type="match status" value="1"/>
</dbReference>
<dbReference type="Gene3D" id="3.50.50.60">
    <property type="entry name" value="FAD/NAD(P)-binding domain"/>
    <property type="match status" value="2"/>
</dbReference>
<dbReference type="Gene3D" id="1.10.150.570">
    <property type="entry name" value="GidA associated domain, C-terminal subdomain"/>
    <property type="match status" value="1"/>
</dbReference>
<dbReference type="Gene3D" id="1.10.10.1800">
    <property type="entry name" value="tRNA uridine 5-carboxymethylaminomethyl modification enzyme MnmG/GidA"/>
    <property type="match status" value="1"/>
</dbReference>
<dbReference type="HAMAP" id="MF_00129">
    <property type="entry name" value="MnmG_GidA"/>
    <property type="match status" value="1"/>
</dbReference>
<dbReference type="InterPro" id="IPR036188">
    <property type="entry name" value="FAD/NAD-bd_sf"/>
</dbReference>
<dbReference type="InterPro" id="IPR049312">
    <property type="entry name" value="GIDA_C_N"/>
</dbReference>
<dbReference type="InterPro" id="IPR004416">
    <property type="entry name" value="MnmG"/>
</dbReference>
<dbReference type="InterPro" id="IPR002218">
    <property type="entry name" value="MnmG-rel"/>
</dbReference>
<dbReference type="InterPro" id="IPR020595">
    <property type="entry name" value="MnmG-rel_CS"/>
</dbReference>
<dbReference type="InterPro" id="IPR026904">
    <property type="entry name" value="MnmG_C"/>
</dbReference>
<dbReference type="InterPro" id="IPR047001">
    <property type="entry name" value="MnmG_C_subdom"/>
</dbReference>
<dbReference type="InterPro" id="IPR044920">
    <property type="entry name" value="MnmG_C_subdom_sf"/>
</dbReference>
<dbReference type="InterPro" id="IPR040131">
    <property type="entry name" value="MnmG_N"/>
</dbReference>
<dbReference type="NCBIfam" id="TIGR00136">
    <property type="entry name" value="mnmG_gidA"/>
    <property type="match status" value="1"/>
</dbReference>
<dbReference type="PANTHER" id="PTHR11806">
    <property type="entry name" value="GLUCOSE INHIBITED DIVISION PROTEIN A"/>
    <property type="match status" value="1"/>
</dbReference>
<dbReference type="PANTHER" id="PTHR11806:SF0">
    <property type="entry name" value="PROTEIN MTO1 HOMOLOG, MITOCHONDRIAL"/>
    <property type="match status" value="1"/>
</dbReference>
<dbReference type="Pfam" id="PF01134">
    <property type="entry name" value="GIDA"/>
    <property type="match status" value="1"/>
</dbReference>
<dbReference type="Pfam" id="PF21680">
    <property type="entry name" value="GIDA_C_1st"/>
    <property type="match status" value="1"/>
</dbReference>
<dbReference type="Pfam" id="PF13932">
    <property type="entry name" value="SAM_GIDA_C"/>
    <property type="match status" value="1"/>
</dbReference>
<dbReference type="SMART" id="SM01228">
    <property type="entry name" value="GIDA_assoc_3"/>
    <property type="match status" value="1"/>
</dbReference>
<dbReference type="SUPFAM" id="SSF51905">
    <property type="entry name" value="FAD/NAD(P)-binding domain"/>
    <property type="match status" value="1"/>
</dbReference>
<dbReference type="PROSITE" id="PS01280">
    <property type="entry name" value="GIDA_1"/>
    <property type="match status" value="1"/>
</dbReference>
<dbReference type="PROSITE" id="PS01281">
    <property type="entry name" value="GIDA_2"/>
    <property type="match status" value="1"/>
</dbReference>
<gene>
    <name evidence="1" type="primary">mnmG</name>
    <name evidence="1" type="synonym">gidA</name>
    <name type="ordered locus">tlr0535</name>
</gene>
<sequence>MSTLPAFQDEFDVIVVGAGHAGCEAALATARLGCRTLLLTLNLDKIAWQPCNPAVGGPAKSQLVHEVDALGGEIGRVSDRTYVQKRLLNASRGPAVWALRAQTDKREYSAVMKQVVENQPNLLVREGMVTDLVLDANDTVIGVETYFGVAFRCQAVILTTGTFLGGRIWVGNKSMPAGRAGEFAAEGLSQTLARLGFEVDRLKTGTPARVDRRSVDYSKMEPQPPDEQVRWFSFDPTVWVERPQMNCYLTRTTPETHRLIREHLHLTPVYGGWVDAKGPRYCPSIEDKIVRFADKESHQIFIEPEGRNTPELYIQGFSTGLPEPLQLQLLRTLPGLENCIMLRPAYAVEYDYLPATQCFPTLMTKKIQGLFCAGQINGTTGYEEAAAQGIVAGINAARFVQRKPMITFPRQESYIGTLIDDLCTKELREPYRMLTSRSEYRLVLRSDNADQRLTPLGYEIGLVSEAQWQVFQAKQRRLAAETQRLQTTRIKAHEPVGEAIVTATGQAIKSAIALEELLRRSGVHYELLDRHGLGNPDLTPQEKEAVEIAIKYAGYIERQQREIEQIARQEQRPLPVDLDYFAIPTLSMEAREKLSAIRPLTIGQASRIGGVNPADINALLVYLQVQQQRQSLTAVGG</sequence>
<evidence type="ECO:0000255" key="1">
    <source>
        <dbReference type="HAMAP-Rule" id="MF_00129"/>
    </source>
</evidence>
<keyword id="KW-0963">Cytoplasm</keyword>
<keyword id="KW-0274">FAD</keyword>
<keyword id="KW-0285">Flavoprotein</keyword>
<keyword id="KW-0520">NAD</keyword>
<keyword id="KW-1185">Reference proteome</keyword>
<keyword id="KW-0819">tRNA processing</keyword>
<organism>
    <name type="scientific">Thermosynechococcus vestitus (strain NIES-2133 / IAM M-273 / BP-1)</name>
    <dbReference type="NCBI Taxonomy" id="197221"/>
    <lineage>
        <taxon>Bacteria</taxon>
        <taxon>Bacillati</taxon>
        <taxon>Cyanobacteriota</taxon>
        <taxon>Cyanophyceae</taxon>
        <taxon>Acaryochloridales</taxon>
        <taxon>Thermosynechococcaceae</taxon>
        <taxon>Thermosynechococcus</taxon>
    </lineage>
</organism>